<keyword id="KW-1185">Reference proteome</keyword>
<keyword id="KW-0687">Ribonucleoprotein</keyword>
<keyword id="KW-0689">Ribosomal protein</keyword>
<keyword id="KW-0694">RNA-binding</keyword>
<keyword id="KW-0699">rRNA-binding</keyword>
<feature type="chain" id="PRO_1000214334" description="Small ribosomal subunit protein uS3">
    <location>
        <begin position="1"/>
        <end position="215"/>
    </location>
</feature>
<feature type="domain" description="KH type-2" evidence="1">
    <location>
        <begin position="38"/>
        <end position="106"/>
    </location>
</feature>
<dbReference type="EMBL" id="CP001087">
    <property type="protein sequence ID" value="ACN16685.1"/>
    <property type="molecule type" value="Genomic_DNA"/>
</dbReference>
<dbReference type="RefSeq" id="WP_015905435.1">
    <property type="nucleotide sequence ID" value="NC_012108.1"/>
</dbReference>
<dbReference type="SMR" id="C0Q9W7"/>
<dbReference type="STRING" id="177437.HRM2_36200"/>
<dbReference type="KEGG" id="dat:HRM2_36200"/>
<dbReference type="eggNOG" id="COG0092">
    <property type="taxonomic scope" value="Bacteria"/>
</dbReference>
<dbReference type="HOGENOM" id="CLU_058591_0_2_7"/>
<dbReference type="OrthoDB" id="9806396at2"/>
<dbReference type="Proteomes" id="UP000000442">
    <property type="component" value="Chromosome"/>
</dbReference>
<dbReference type="GO" id="GO:0022627">
    <property type="term" value="C:cytosolic small ribosomal subunit"/>
    <property type="evidence" value="ECO:0007669"/>
    <property type="project" value="TreeGrafter"/>
</dbReference>
<dbReference type="GO" id="GO:0003729">
    <property type="term" value="F:mRNA binding"/>
    <property type="evidence" value="ECO:0007669"/>
    <property type="project" value="UniProtKB-UniRule"/>
</dbReference>
<dbReference type="GO" id="GO:0019843">
    <property type="term" value="F:rRNA binding"/>
    <property type="evidence" value="ECO:0007669"/>
    <property type="project" value="UniProtKB-UniRule"/>
</dbReference>
<dbReference type="GO" id="GO:0003735">
    <property type="term" value="F:structural constituent of ribosome"/>
    <property type="evidence" value="ECO:0007669"/>
    <property type="project" value="InterPro"/>
</dbReference>
<dbReference type="GO" id="GO:0006412">
    <property type="term" value="P:translation"/>
    <property type="evidence" value="ECO:0007669"/>
    <property type="project" value="UniProtKB-UniRule"/>
</dbReference>
<dbReference type="CDD" id="cd02412">
    <property type="entry name" value="KH-II_30S_S3"/>
    <property type="match status" value="1"/>
</dbReference>
<dbReference type="FunFam" id="3.30.1140.32:FF:000002">
    <property type="entry name" value="30S ribosomal protein S3"/>
    <property type="match status" value="1"/>
</dbReference>
<dbReference type="FunFam" id="3.30.300.20:FF:000001">
    <property type="entry name" value="30S ribosomal protein S3"/>
    <property type="match status" value="1"/>
</dbReference>
<dbReference type="Gene3D" id="3.30.300.20">
    <property type="match status" value="1"/>
</dbReference>
<dbReference type="Gene3D" id="3.30.1140.32">
    <property type="entry name" value="Ribosomal protein S3, C-terminal domain"/>
    <property type="match status" value="1"/>
</dbReference>
<dbReference type="HAMAP" id="MF_01309_B">
    <property type="entry name" value="Ribosomal_uS3_B"/>
    <property type="match status" value="1"/>
</dbReference>
<dbReference type="InterPro" id="IPR004087">
    <property type="entry name" value="KH_dom"/>
</dbReference>
<dbReference type="InterPro" id="IPR015946">
    <property type="entry name" value="KH_dom-like_a/b"/>
</dbReference>
<dbReference type="InterPro" id="IPR004044">
    <property type="entry name" value="KH_dom_type_2"/>
</dbReference>
<dbReference type="InterPro" id="IPR009019">
    <property type="entry name" value="KH_sf_prok-type"/>
</dbReference>
<dbReference type="InterPro" id="IPR036419">
    <property type="entry name" value="Ribosomal_S3_C_sf"/>
</dbReference>
<dbReference type="InterPro" id="IPR005704">
    <property type="entry name" value="Ribosomal_uS3_bac-typ"/>
</dbReference>
<dbReference type="InterPro" id="IPR001351">
    <property type="entry name" value="Ribosomal_uS3_C"/>
</dbReference>
<dbReference type="InterPro" id="IPR018280">
    <property type="entry name" value="Ribosomal_uS3_CS"/>
</dbReference>
<dbReference type="NCBIfam" id="TIGR01009">
    <property type="entry name" value="rpsC_bact"/>
    <property type="match status" value="1"/>
</dbReference>
<dbReference type="PANTHER" id="PTHR11760">
    <property type="entry name" value="30S/40S RIBOSOMAL PROTEIN S3"/>
    <property type="match status" value="1"/>
</dbReference>
<dbReference type="PANTHER" id="PTHR11760:SF19">
    <property type="entry name" value="SMALL RIBOSOMAL SUBUNIT PROTEIN US3C"/>
    <property type="match status" value="1"/>
</dbReference>
<dbReference type="Pfam" id="PF07650">
    <property type="entry name" value="KH_2"/>
    <property type="match status" value="1"/>
</dbReference>
<dbReference type="Pfam" id="PF00189">
    <property type="entry name" value="Ribosomal_S3_C"/>
    <property type="match status" value="1"/>
</dbReference>
<dbReference type="SMART" id="SM00322">
    <property type="entry name" value="KH"/>
    <property type="match status" value="1"/>
</dbReference>
<dbReference type="SUPFAM" id="SSF54814">
    <property type="entry name" value="Prokaryotic type KH domain (KH-domain type II)"/>
    <property type="match status" value="1"/>
</dbReference>
<dbReference type="SUPFAM" id="SSF54821">
    <property type="entry name" value="Ribosomal protein S3 C-terminal domain"/>
    <property type="match status" value="1"/>
</dbReference>
<dbReference type="PROSITE" id="PS50823">
    <property type="entry name" value="KH_TYPE_2"/>
    <property type="match status" value="1"/>
</dbReference>
<dbReference type="PROSITE" id="PS00548">
    <property type="entry name" value="RIBOSOMAL_S3"/>
    <property type="match status" value="1"/>
</dbReference>
<evidence type="ECO:0000255" key="1">
    <source>
        <dbReference type="HAMAP-Rule" id="MF_01309"/>
    </source>
</evidence>
<evidence type="ECO:0000305" key="2"/>
<name>RS3_DESAH</name>
<organism>
    <name type="scientific">Desulforapulum autotrophicum (strain ATCC 43914 / DSM 3382 / VKM B-1955 / HRM2)</name>
    <name type="common">Desulfobacterium autotrophicum</name>
    <dbReference type="NCBI Taxonomy" id="177437"/>
    <lineage>
        <taxon>Bacteria</taxon>
        <taxon>Pseudomonadati</taxon>
        <taxon>Thermodesulfobacteriota</taxon>
        <taxon>Desulfobacteria</taxon>
        <taxon>Desulfobacterales</taxon>
        <taxon>Desulfobacteraceae</taxon>
        <taxon>Desulforapulum</taxon>
    </lineage>
</organism>
<sequence length="215" mass="24636">MGQKVNPIGLRLNIVKTWDSRWYADKNYADFVFEDYKLRAFLKKKLFHAGISKIEIERFTKRIRIRVFAARPGIIIGKKGSEIALLKKEIEQMITPEVLIDIQEIRRPEIDAQLVAENISAQLERRIAFRRAMKRSVSSAMRFGAQGIKIICSGRLGGAEMARTEWYKEGRIPLHTLRADVDYGFTEAKTTYGAIGIKTFIFKGEVLKADRNVKA</sequence>
<comment type="function">
    <text evidence="1">Binds the lower part of the 30S subunit head. Binds mRNA in the 70S ribosome, positioning it for translation.</text>
</comment>
<comment type="subunit">
    <text evidence="1">Part of the 30S ribosomal subunit. Forms a tight complex with proteins S10 and S14.</text>
</comment>
<comment type="similarity">
    <text evidence="1">Belongs to the universal ribosomal protein uS3 family.</text>
</comment>
<proteinExistence type="inferred from homology"/>
<reference key="1">
    <citation type="journal article" date="2009" name="Environ. Microbiol.">
        <title>Genome sequence of Desulfobacterium autotrophicum HRM2, a marine sulfate reducer oxidizing organic carbon completely to carbon dioxide.</title>
        <authorList>
            <person name="Strittmatter A.W."/>
            <person name="Liesegang H."/>
            <person name="Rabus R."/>
            <person name="Decker I."/>
            <person name="Amann J."/>
            <person name="Andres S."/>
            <person name="Henne A."/>
            <person name="Fricke W.F."/>
            <person name="Martinez-Arias R."/>
            <person name="Bartels D."/>
            <person name="Goesmann A."/>
            <person name="Krause L."/>
            <person name="Puehler A."/>
            <person name="Klenk H.P."/>
            <person name="Richter M."/>
            <person name="Schuler M."/>
            <person name="Gloeckner F.O."/>
            <person name="Meyerdierks A."/>
            <person name="Gottschalk G."/>
            <person name="Amann R."/>
        </authorList>
    </citation>
    <scope>NUCLEOTIDE SEQUENCE [LARGE SCALE GENOMIC DNA]</scope>
    <source>
        <strain>ATCC 43914 / DSM 3382 / VKM B-1955 / HRM2</strain>
    </source>
</reference>
<accession>C0Q9W7</accession>
<protein>
    <recommendedName>
        <fullName evidence="1">Small ribosomal subunit protein uS3</fullName>
    </recommendedName>
    <alternativeName>
        <fullName evidence="2">30S ribosomal protein S3</fullName>
    </alternativeName>
</protein>
<gene>
    <name evidence="1" type="primary">rpsC</name>
    <name type="ordered locus">HRM2_36200</name>
</gene>